<gene>
    <name evidence="1" type="primary">trmFO</name>
    <name type="ordered locus">P9215_12521</name>
</gene>
<reference key="1">
    <citation type="journal article" date="2007" name="PLoS Genet.">
        <title>Patterns and implications of gene gain and loss in the evolution of Prochlorococcus.</title>
        <authorList>
            <person name="Kettler G.C."/>
            <person name="Martiny A.C."/>
            <person name="Huang K."/>
            <person name="Zucker J."/>
            <person name="Coleman M.L."/>
            <person name="Rodrigue S."/>
            <person name="Chen F."/>
            <person name="Lapidus A."/>
            <person name="Ferriera S."/>
            <person name="Johnson J."/>
            <person name="Steglich C."/>
            <person name="Church G.M."/>
            <person name="Richardson P."/>
            <person name="Chisholm S.W."/>
        </authorList>
    </citation>
    <scope>NUCLEOTIDE SEQUENCE [LARGE SCALE GENOMIC DNA]</scope>
    <source>
        <strain>MIT 9215</strain>
    </source>
</reference>
<dbReference type="EC" id="2.1.1.74" evidence="1"/>
<dbReference type="EMBL" id="CP000825">
    <property type="protein sequence ID" value="ABV50867.1"/>
    <property type="molecule type" value="Genomic_DNA"/>
</dbReference>
<dbReference type="RefSeq" id="WP_012007937.1">
    <property type="nucleotide sequence ID" value="NC_009840.1"/>
</dbReference>
<dbReference type="SMR" id="A8G5I6"/>
<dbReference type="STRING" id="93060.P9215_12521"/>
<dbReference type="KEGG" id="pmh:P9215_12521"/>
<dbReference type="eggNOG" id="COG1206">
    <property type="taxonomic scope" value="Bacteria"/>
</dbReference>
<dbReference type="HOGENOM" id="CLU_033057_1_0_3"/>
<dbReference type="OrthoDB" id="9803114at2"/>
<dbReference type="Proteomes" id="UP000002014">
    <property type="component" value="Chromosome"/>
</dbReference>
<dbReference type="GO" id="GO:0005829">
    <property type="term" value="C:cytosol"/>
    <property type="evidence" value="ECO:0007669"/>
    <property type="project" value="TreeGrafter"/>
</dbReference>
<dbReference type="GO" id="GO:0050660">
    <property type="term" value="F:flavin adenine dinucleotide binding"/>
    <property type="evidence" value="ECO:0007669"/>
    <property type="project" value="UniProtKB-UniRule"/>
</dbReference>
<dbReference type="GO" id="GO:0047151">
    <property type="term" value="F:tRNA (uracil(54)-C5)-methyltransferase activity, 5,10-methylenetetrahydrofolate-dependent"/>
    <property type="evidence" value="ECO:0007669"/>
    <property type="project" value="UniProtKB-UniRule"/>
</dbReference>
<dbReference type="GO" id="GO:0030488">
    <property type="term" value="P:tRNA methylation"/>
    <property type="evidence" value="ECO:0007669"/>
    <property type="project" value="TreeGrafter"/>
</dbReference>
<dbReference type="GO" id="GO:0002098">
    <property type="term" value="P:tRNA wobble uridine modification"/>
    <property type="evidence" value="ECO:0007669"/>
    <property type="project" value="TreeGrafter"/>
</dbReference>
<dbReference type="Gene3D" id="3.50.50.60">
    <property type="entry name" value="FAD/NAD(P)-binding domain"/>
    <property type="match status" value="2"/>
</dbReference>
<dbReference type="HAMAP" id="MF_01037">
    <property type="entry name" value="TrmFO"/>
    <property type="match status" value="1"/>
</dbReference>
<dbReference type="InterPro" id="IPR036188">
    <property type="entry name" value="FAD/NAD-bd_sf"/>
</dbReference>
<dbReference type="InterPro" id="IPR002218">
    <property type="entry name" value="MnmG-rel"/>
</dbReference>
<dbReference type="InterPro" id="IPR020595">
    <property type="entry name" value="MnmG-rel_CS"/>
</dbReference>
<dbReference type="InterPro" id="IPR040131">
    <property type="entry name" value="MnmG_N"/>
</dbReference>
<dbReference type="InterPro" id="IPR004417">
    <property type="entry name" value="TrmFO"/>
</dbReference>
<dbReference type="NCBIfam" id="TIGR00137">
    <property type="entry name" value="gid_trmFO"/>
    <property type="match status" value="1"/>
</dbReference>
<dbReference type="NCBIfam" id="NF003739">
    <property type="entry name" value="PRK05335.1"/>
    <property type="match status" value="1"/>
</dbReference>
<dbReference type="PANTHER" id="PTHR11806">
    <property type="entry name" value="GLUCOSE INHIBITED DIVISION PROTEIN A"/>
    <property type="match status" value="1"/>
</dbReference>
<dbReference type="PANTHER" id="PTHR11806:SF2">
    <property type="entry name" value="METHYLENETETRAHYDROFOLATE--TRNA-(URACIL-5-)-METHYLTRANSFERASE TRMFO"/>
    <property type="match status" value="1"/>
</dbReference>
<dbReference type="Pfam" id="PF01134">
    <property type="entry name" value="GIDA"/>
    <property type="match status" value="1"/>
</dbReference>
<dbReference type="SUPFAM" id="SSF51905">
    <property type="entry name" value="FAD/NAD(P)-binding domain"/>
    <property type="match status" value="1"/>
</dbReference>
<dbReference type="PROSITE" id="PS01281">
    <property type="entry name" value="GIDA_2"/>
    <property type="match status" value="1"/>
</dbReference>
<feature type="chain" id="PRO_0000346376" description="Methylenetetrahydrofolate--tRNA-(uracil-5-)-methyltransferase TrmFO">
    <location>
        <begin position="1"/>
        <end position="470"/>
    </location>
</feature>
<feature type="binding site" evidence="1">
    <location>
        <begin position="10"/>
        <end position="15"/>
    </location>
    <ligand>
        <name>FAD</name>
        <dbReference type="ChEBI" id="CHEBI:57692"/>
    </ligand>
</feature>
<organism>
    <name type="scientific">Prochlorococcus marinus (strain MIT 9215)</name>
    <dbReference type="NCBI Taxonomy" id="93060"/>
    <lineage>
        <taxon>Bacteria</taxon>
        <taxon>Bacillati</taxon>
        <taxon>Cyanobacteriota</taxon>
        <taxon>Cyanophyceae</taxon>
        <taxon>Synechococcales</taxon>
        <taxon>Prochlorococcaceae</taxon>
        <taxon>Prochlorococcus</taxon>
    </lineage>
</organism>
<evidence type="ECO:0000255" key="1">
    <source>
        <dbReference type="HAMAP-Rule" id="MF_01037"/>
    </source>
</evidence>
<accession>A8G5I6</accession>
<proteinExistence type="inferred from homology"/>
<keyword id="KW-0963">Cytoplasm</keyword>
<keyword id="KW-0274">FAD</keyword>
<keyword id="KW-0285">Flavoprotein</keyword>
<keyword id="KW-0489">Methyltransferase</keyword>
<keyword id="KW-0520">NAD</keyword>
<keyword id="KW-0521">NADP</keyword>
<keyword id="KW-0808">Transferase</keyword>
<keyword id="KW-0819">tRNA processing</keyword>
<protein>
    <recommendedName>
        <fullName evidence="1">Methylenetetrahydrofolate--tRNA-(uracil-5-)-methyltransferase TrmFO</fullName>
        <ecNumber evidence="1">2.1.1.74</ecNumber>
    </recommendedName>
    <alternativeName>
        <fullName evidence="1">Folate-dependent tRNA (uracil-5-)-methyltransferase</fullName>
    </alternativeName>
    <alternativeName>
        <fullName evidence="1">Folate-dependent tRNA(M-5-U54)-methyltransferase</fullName>
    </alternativeName>
</protein>
<name>TRMFO_PROM2</name>
<comment type="function">
    <text evidence="1">Catalyzes the folate-dependent formation of 5-methyl-uridine at position 54 (M-5-U54) in all tRNAs.</text>
</comment>
<comment type="catalytic activity">
    <reaction evidence="1">
        <text>uridine(54) in tRNA + (6R)-5,10-methylene-5,6,7,8-tetrahydrofolate + NADH + H(+) = 5-methyluridine(54) in tRNA + (6S)-5,6,7,8-tetrahydrofolate + NAD(+)</text>
        <dbReference type="Rhea" id="RHEA:16873"/>
        <dbReference type="Rhea" id="RHEA-COMP:10167"/>
        <dbReference type="Rhea" id="RHEA-COMP:10193"/>
        <dbReference type="ChEBI" id="CHEBI:15378"/>
        <dbReference type="ChEBI" id="CHEBI:15636"/>
        <dbReference type="ChEBI" id="CHEBI:57453"/>
        <dbReference type="ChEBI" id="CHEBI:57540"/>
        <dbReference type="ChEBI" id="CHEBI:57945"/>
        <dbReference type="ChEBI" id="CHEBI:65315"/>
        <dbReference type="ChEBI" id="CHEBI:74447"/>
        <dbReference type="EC" id="2.1.1.74"/>
    </reaction>
</comment>
<comment type="catalytic activity">
    <reaction evidence="1">
        <text>uridine(54) in tRNA + (6R)-5,10-methylene-5,6,7,8-tetrahydrofolate + NADPH + H(+) = 5-methyluridine(54) in tRNA + (6S)-5,6,7,8-tetrahydrofolate + NADP(+)</text>
        <dbReference type="Rhea" id="RHEA:62372"/>
        <dbReference type="Rhea" id="RHEA-COMP:10167"/>
        <dbReference type="Rhea" id="RHEA-COMP:10193"/>
        <dbReference type="ChEBI" id="CHEBI:15378"/>
        <dbReference type="ChEBI" id="CHEBI:15636"/>
        <dbReference type="ChEBI" id="CHEBI:57453"/>
        <dbReference type="ChEBI" id="CHEBI:57783"/>
        <dbReference type="ChEBI" id="CHEBI:58349"/>
        <dbReference type="ChEBI" id="CHEBI:65315"/>
        <dbReference type="ChEBI" id="CHEBI:74447"/>
        <dbReference type="EC" id="2.1.1.74"/>
    </reaction>
</comment>
<comment type="cofactor">
    <cofactor evidence="1">
        <name>FAD</name>
        <dbReference type="ChEBI" id="CHEBI:57692"/>
    </cofactor>
</comment>
<comment type="subcellular location">
    <subcellularLocation>
        <location evidence="1">Cytoplasm</location>
    </subcellularLocation>
</comment>
<comment type="similarity">
    <text evidence="1">Belongs to the MnmG family. TrmFO subfamily.</text>
</comment>
<sequence length="470" mass="52771">MIDKKVIVIGAGLAGSEAAWQVANAGVPVKLVEMRPFKSTPAHHTGEFGELVCSNSFGALNPDRAAGLLQKELRIFKSLIIQTADKFAVPAGGALAVDRSKFSMALTEALSSHPLIEIERFEQLDLPRKEKITILATGPLTSDELSYKIQAFTGIDACHFFDAASPIIYGDSIDQEIVFKASRYDKGDPAYLNCPMDKNNYIHFRNQLIEGEQANLKDFEKESANFFEACLPIEEIARRGVDTMRFGPLKSIGLWNPKWGDLFDRENRLKKRPYAIVQLRKEDLEGKLLNMVGFQTNLKWSEQKRIFRMIPGLEKAEFVRFGVMHRNTFLESPNLLLPTLQFMKRNNLFAAGQITGTEGYAAAAAGGLLAGINASLLAKGKKTVSFPKESMIGSLINFISNKNQILSNQKKNKFQPMPASFGLVPELTKRIKDKRLRYKAYQERSTEALNDFKNKLDYCFEKDHLLSKIY</sequence>